<protein>
    <recommendedName>
        <fullName evidence="1">8-amino-7-oxononanoate synthase</fullName>
        <shortName evidence="1">AONS</shortName>
        <ecNumber evidence="1">2.3.1.47</ecNumber>
    </recommendedName>
    <alternativeName>
        <fullName evidence="1">7-keto-8-amino-pelargonic acid synthase</fullName>
        <shortName evidence="1">7-KAP synthase</shortName>
        <shortName evidence="1">KAPA synthase</shortName>
    </alternativeName>
    <alternativeName>
        <fullName evidence="1">8-amino-7-ketopelargonate synthase</fullName>
    </alternativeName>
</protein>
<proteinExistence type="inferred from homology"/>
<name>BIOF_ENT38</name>
<organism>
    <name type="scientific">Enterobacter sp. (strain 638)</name>
    <dbReference type="NCBI Taxonomy" id="399742"/>
    <lineage>
        <taxon>Bacteria</taxon>
        <taxon>Pseudomonadati</taxon>
        <taxon>Pseudomonadota</taxon>
        <taxon>Gammaproteobacteria</taxon>
        <taxon>Enterobacterales</taxon>
        <taxon>Enterobacteriaceae</taxon>
        <taxon>Enterobacter</taxon>
    </lineage>
</organism>
<dbReference type="EC" id="2.3.1.47" evidence="1"/>
<dbReference type="EMBL" id="CP000653">
    <property type="protein sequence ID" value="ABP59948.1"/>
    <property type="molecule type" value="Genomic_DNA"/>
</dbReference>
<dbReference type="RefSeq" id="WP_012016667.1">
    <property type="nucleotide sequence ID" value="NC_009436.1"/>
</dbReference>
<dbReference type="SMR" id="A4W8B8"/>
<dbReference type="STRING" id="399742.Ent638_1267"/>
<dbReference type="KEGG" id="ent:Ent638_1267"/>
<dbReference type="eggNOG" id="COG0156">
    <property type="taxonomic scope" value="Bacteria"/>
</dbReference>
<dbReference type="HOGENOM" id="CLU_015846_11_2_6"/>
<dbReference type="OrthoDB" id="9807157at2"/>
<dbReference type="UniPathway" id="UPA00078"/>
<dbReference type="Proteomes" id="UP000000230">
    <property type="component" value="Chromosome"/>
</dbReference>
<dbReference type="GO" id="GO:0008710">
    <property type="term" value="F:8-amino-7-oxononanoate synthase activity"/>
    <property type="evidence" value="ECO:0007669"/>
    <property type="project" value="UniProtKB-UniRule"/>
</dbReference>
<dbReference type="GO" id="GO:0030170">
    <property type="term" value="F:pyridoxal phosphate binding"/>
    <property type="evidence" value="ECO:0007669"/>
    <property type="project" value="UniProtKB-UniRule"/>
</dbReference>
<dbReference type="GO" id="GO:0009102">
    <property type="term" value="P:biotin biosynthetic process"/>
    <property type="evidence" value="ECO:0007669"/>
    <property type="project" value="UniProtKB-UniRule"/>
</dbReference>
<dbReference type="CDD" id="cd06454">
    <property type="entry name" value="KBL_like"/>
    <property type="match status" value="1"/>
</dbReference>
<dbReference type="FunFam" id="3.40.640.10:FF:000095">
    <property type="entry name" value="8-amino-7-oxononanoate synthase"/>
    <property type="match status" value="1"/>
</dbReference>
<dbReference type="Gene3D" id="3.90.1150.10">
    <property type="entry name" value="Aspartate Aminotransferase, domain 1"/>
    <property type="match status" value="1"/>
</dbReference>
<dbReference type="Gene3D" id="3.40.640.10">
    <property type="entry name" value="Type I PLP-dependent aspartate aminotransferase-like (Major domain)"/>
    <property type="match status" value="1"/>
</dbReference>
<dbReference type="HAMAP" id="MF_01693">
    <property type="entry name" value="BioF_aminotrans_2"/>
    <property type="match status" value="1"/>
</dbReference>
<dbReference type="InterPro" id="IPR001917">
    <property type="entry name" value="Aminotrans_II_pyridoxalP_BS"/>
</dbReference>
<dbReference type="InterPro" id="IPR004839">
    <property type="entry name" value="Aminotransferase_I/II_large"/>
</dbReference>
<dbReference type="InterPro" id="IPR050087">
    <property type="entry name" value="AON_synthase_class-II"/>
</dbReference>
<dbReference type="InterPro" id="IPR004723">
    <property type="entry name" value="AONS_Archaea/Proteobacteria"/>
</dbReference>
<dbReference type="InterPro" id="IPR022834">
    <property type="entry name" value="AONS_Proteobacteria"/>
</dbReference>
<dbReference type="InterPro" id="IPR015424">
    <property type="entry name" value="PyrdxlP-dep_Trfase"/>
</dbReference>
<dbReference type="InterPro" id="IPR015421">
    <property type="entry name" value="PyrdxlP-dep_Trfase_major"/>
</dbReference>
<dbReference type="InterPro" id="IPR015422">
    <property type="entry name" value="PyrdxlP-dep_Trfase_small"/>
</dbReference>
<dbReference type="NCBIfam" id="TIGR00858">
    <property type="entry name" value="bioF"/>
    <property type="match status" value="1"/>
</dbReference>
<dbReference type="PANTHER" id="PTHR13693:SF100">
    <property type="entry name" value="8-AMINO-7-OXONONANOATE SYNTHASE"/>
    <property type="match status" value="1"/>
</dbReference>
<dbReference type="PANTHER" id="PTHR13693">
    <property type="entry name" value="CLASS II AMINOTRANSFERASE/8-AMINO-7-OXONONANOATE SYNTHASE"/>
    <property type="match status" value="1"/>
</dbReference>
<dbReference type="Pfam" id="PF00155">
    <property type="entry name" value="Aminotran_1_2"/>
    <property type="match status" value="1"/>
</dbReference>
<dbReference type="SUPFAM" id="SSF53383">
    <property type="entry name" value="PLP-dependent transferases"/>
    <property type="match status" value="1"/>
</dbReference>
<dbReference type="PROSITE" id="PS00599">
    <property type="entry name" value="AA_TRANSFER_CLASS_2"/>
    <property type="match status" value="1"/>
</dbReference>
<feature type="chain" id="PRO_0000380986" description="8-amino-7-oxononanoate synthase">
    <location>
        <begin position="1"/>
        <end position="384"/>
    </location>
</feature>
<feature type="binding site" evidence="1">
    <location>
        <position position="21"/>
    </location>
    <ligand>
        <name>substrate</name>
    </ligand>
</feature>
<feature type="binding site" evidence="1">
    <location>
        <begin position="108"/>
        <end position="109"/>
    </location>
    <ligand>
        <name>pyridoxal 5'-phosphate</name>
        <dbReference type="ChEBI" id="CHEBI:597326"/>
    </ligand>
</feature>
<feature type="binding site" evidence="1">
    <location>
        <position position="133"/>
    </location>
    <ligand>
        <name>substrate</name>
    </ligand>
</feature>
<feature type="binding site" evidence="1">
    <location>
        <position position="179"/>
    </location>
    <ligand>
        <name>pyridoxal 5'-phosphate</name>
        <dbReference type="ChEBI" id="CHEBI:597326"/>
    </ligand>
</feature>
<feature type="binding site" evidence="1">
    <location>
        <position position="207"/>
    </location>
    <ligand>
        <name>pyridoxal 5'-phosphate</name>
        <dbReference type="ChEBI" id="CHEBI:597326"/>
    </ligand>
</feature>
<feature type="binding site" evidence="1">
    <location>
        <position position="233"/>
    </location>
    <ligand>
        <name>pyridoxal 5'-phosphate</name>
        <dbReference type="ChEBI" id="CHEBI:597326"/>
    </ligand>
</feature>
<feature type="binding site" evidence="1">
    <location>
        <position position="352"/>
    </location>
    <ligand>
        <name>substrate</name>
    </ligand>
</feature>
<feature type="modified residue" description="N6-(pyridoxal phosphate)lysine" evidence="1">
    <location>
        <position position="236"/>
    </location>
</feature>
<accession>A4W8B8</accession>
<gene>
    <name evidence="1" type="primary">bioF</name>
    <name type="ordered locus">Ent638_1267</name>
</gene>
<sequence>MTWQQRITTALEKRRATDAFRVRTVVEGGAGRFLIRDQCQFCNFSSNDYLGLSQHPAIVRAWQDGAERYGVGSGGSGHVSGYTTAHHALEESLADWLGYSRALLFISGFAANQALIAALMEKDDRIVADRLSHASLLEAANLSPAQLRRFAHNDASQLNTLLEKPCDGQQLVVTEGVFSMDGDSAPLGDVQATAQRHSAWLLVDDAHGIGVLGDEGRGSAFSQHVQPEVLVVTFGKGFGVSGAAVLCSDSVADYLLQFARHLIYSTSMPPAQAVALQAALKVIRSDDGEQRRQTLAALIQRFRAGVRDLPYQTTDSHSAIQPLIVGENSRALTLAEQLRERNMWVTAIRPPTVPAGTARLRLTLTAAHQTQDIDNVLEALYAAG</sequence>
<keyword id="KW-0093">Biotin biosynthesis</keyword>
<keyword id="KW-0663">Pyridoxal phosphate</keyword>
<keyword id="KW-0808">Transferase</keyword>
<reference key="1">
    <citation type="journal article" date="2010" name="PLoS Genet.">
        <title>Genome sequence of the plant growth promoting endophytic bacterium Enterobacter sp. 638.</title>
        <authorList>
            <person name="Taghavi S."/>
            <person name="van der Lelie D."/>
            <person name="Hoffman A."/>
            <person name="Zhang Y.B."/>
            <person name="Walla M.D."/>
            <person name="Vangronsveld J."/>
            <person name="Newman L."/>
            <person name="Monchy S."/>
        </authorList>
    </citation>
    <scope>NUCLEOTIDE SEQUENCE [LARGE SCALE GENOMIC DNA]</scope>
    <source>
        <strain>638</strain>
    </source>
</reference>
<comment type="function">
    <text evidence="1">Catalyzes the decarboxylative condensation of pimeloyl-[acyl-carrier protein] and L-alanine to produce 8-amino-7-oxononanoate (AON), [acyl-carrier protein], and carbon dioxide.</text>
</comment>
<comment type="catalytic activity">
    <reaction evidence="1">
        <text>6-carboxyhexanoyl-[ACP] + L-alanine + H(+) = (8S)-8-amino-7-oxononanoate + holo-[ACP] + CO2</text>
        <dbReference type="Rhea" id="RHEA:42288"/>
        <dbReference type="Rhea" id="RHEA-COMP:9685"/>
        <dbReference type="Rhea" id="RHEA-COMP:9955"/>
        <dbReference type="ChEBI" id="CHEBI:15378"/>
        <dbReference type="ChEBI" id="CHEBI:16526"/>
        <dbReference type="ChEBI" id="CHEBI:57972"/>
        <dbReference type="ChEBI" id="CHEBI:64479"/>
        <dbReference type="ChEBI" id="CHEBI:78846"/>
        <dbReference type="ChEBI" id="CHEBI:149468"/>
        <dbReference type="EC" id="2.3.1.47"/>
    </reaction>
</comment>
<comment type="cofactor">
    <cofactor evidence="1">
        <name>pyridoxal 5'-phosphate</name>
        <dbReference type="ChEBI" id="CHEBI:597326"/>
    </cofactor>
</comment>
<comment type="pathway">
    <text evidence="1">Cofactor biosynthesis; biotin biosynthesis.</text>
</comment>
<comment type="subunit">
    <text evidence="1">Homodimer.</text>
</comment>
<comment type="similarity">
    <text evidence="1">Belongs to the class-II pyridoxal-phosphate-dependent aminotransferase family. BioF subfamily.</text>
</comment>
<evidence type="ECO:0000255" key="1">
    <source>
        <dbReference type="HAMAP-Rule" id="MF_01693"/>
    </source>
</evidence>